<feature type="chain" id="PRO_1000215174" description="Peptide methionine sulfoxide reductase MsrB">
    <location>
        <begin position="1"/>
        <end position="139"/>
    </location>
</feature>
<feature type="domain" description="MsrB" evidence="2">
    <location>
        <begin position="14"/>
        <end position="137"/>
    </location>
</feature>
<feature type="active site" description="Nucleophile" evidence="2">
    <location>
        <position position="126"/>
    </location>
</feature>
<feature type="binding site" evidence="2">
    <location>
        <position position="53"/>
    </location>
    <ligand>
        <name>Zn(2+)</name>
        <dbReference type="ChEBI" id="CHEBI:29105"/>
    </ligand>
</feature>
<feature type="binding site" evidence="2">
    <location>
        <position position="56"/>
    </location>
    <ligand>
        <name>Zn(2+)</name>
        <dbReference type="ChEBI" id="CHEBI:29105"/>
    </ligand>
</feature>
<feature type="binding site" evidence="2">
    <location>
        <position position="102"/>
    </location>
    <ligand>
        <name>Zn(2+)</name>
        <dbReference type="ChEBI" id="CHEBI:29105"/>
    </ligand>
</feature>
<feature type="binding site" evidence="2">
    <location>
        <position position="105"/>
    </location>
    <ligand>
        <name>Zn(2+)</name>
        <dbReference type="ChEBI" id="CHEBI:29105"/>
    </ligand>
</feature>
<proteinExistence type="inferred from homology"/>
<comment type="catalytic activity">
    <reaction evidence="1">
        <text>L-methionyl-[protein] + [thioredoxin]-disulfide + H2O = L-methionyl-(R)-S-oxide-[protein] + [thioredoxin]-dithiol</text>
        <dbReference type="Rhea" id="RHEA:24164"/>
        <dbReference type="Rhea" id="RHEA-COMP:10698"/>
        <dbReference type="Rhea" id="RHEA-COMP:10700"/>
        <dbReference type="Rhea" id="RHEA-COMP:12313"/>
        <dbReference type="Rhea" id="RHEA-COMP:12314"/>
        <dbReference type="ChEBI" id="CHEBI:15377"/>
        <dbReference type="ChEBI" id="CHEBI:16044"/>
        <dbReference type="ChEBI" id="CHEBI:29950"/>
        <dbReference type="ChEBI" id="CHEBI:45764"/>
        <dbReference type="ChEBI" id="CHEBI:50058"/>
        <dbReference type="EC" id="1.8.4.12"/>
    </reaction>
</comment>
<comment type="cofactor">
    <cofactor evidence="1">
        <name>Zn(2+)</name>
        <dbReference type="ChEBI" id="CHEBI:29105"/>
    </cofactor>
    <text evidence="1">Binds 1 zinc ion per subunit. The zinc ion is important for the structural integrity of the protein.</text>
</comment>
<comment type="similarity">
    <text evidence="1">Belongs to the MsrB Met sulfoxide reductase family.</text>
</comment>
<reference key="1">
    <citation type="journal article" date="2004" name="Mol. Plant Microbe Interact.">
        <title>The genome sequence of the Gram-positive sugarcane pathogen Leifsonia xyli subsp. xyli.</title>
        <authorList>
            <person name="Monteiro-Vitorello C.B."/>
            <person name="Camargo L.E.A."/>
            <person name="Van Sluys M.A."/>
            <person name="Kitajima J.P."/>
            <person name="Truffi D."/>
            <person name="do Amaral A.M."/>
            <person name="Harakava R."/>
            <person name="de Oliveira J.C.F."/>
            <person name="Wood D."/>
            <person name="de Oliveira M.C."/>
            <person name="Miyaki C.Y."/>
            <person name="Takita M.A."/>
            <person name="da Silva A.C.R."/>
            <person name="Furlan L.R."/>
            <person name="Carraro D.M."/>
            <person name="Camarotte G."/>
            <person name="Almeida N.F. Jr."/>
            <person name="Carrer H."/>
            <person name="Coutinho L.L."/>
            <person name="El-Dorry H.A."/>
            <person name="Ferro M.I.T."/>
            <person name="Gagliardi P.R."/>
            <person name="Giglioti E."/>
            <person name="Goldman M.H.S."/>
            <person name="Goldman G.H."/>
            <person name="Kimura E.T."/>
            <person name="Ferro E.S."/>
            <person name="Kuramae E.E."/>
            <person name="Lemos E.G.M."/>
            <person name="Lemos M.V.F."/>
            <person name="Mauro S.M.Z."/>
            <person name="Machado M.A."/>
            <person name="Marino C.L."/>
            <person name="Menck C.F."/>
            <person name="Nunes L.R."/>
            <person name="Oliveira R.C."/>
            <person name="Pereira G.G."/>
            <person name="Siqueira W."/>
            <person name="de Souza A.A."/>
            <person name="Tsai S.M."/>
            <person name="Zanca A.S."/>
            <person name="Simpson A.J.G."/>
            <person name="Brumbley S.M."/>
            <person name="Setubal J.C."/>
        </authorList>
    </citation>
    <scope>NUCLEOTIDE SEQUENCE [LARGE SCALE GENOMIC DNA]</scope>
    <source>
        <strain>CTCB07</strain>
    </source>
</reference>
<organism>
    <name type="scientific">Leifsonia xyli subsp. xyli (strain CTCB07)</name>
    <dbReference type="NCBI Taxonomy" id="281090"/>
    <lineage>
        <taxon>Bacteria</taxon>
        <taxon>Bacillati</taxon>
        <taxon>Actinomycetota</taxon>
        <taxon>Actinomycetes</taxon>
        <taxon>Micrococcales</taxon>
        <taxon>Microbacteriaceae</taxon>
        <taxon>Leifsonia</taxon>
    </lineage>
</organism>
<name>MSRB_LEIXX</name>
<protein>
    <recommendedName>
        <fullName evidence="1">Peptide methionine sulfoxide reductase MsrB</fullName>
        <ecNumber evidence="1">1.8.4.12</ecNumber>
    </recommendedName>
    <alternativeName>
        <fullName evidence="1">Peptide-methionine (R)-S-oxide reductase</fullName>
    </alternativeName>
</protein>
<keyword id="KW-0479">Metal-binding</keyword>
<keyword id="KW-0560">Oxidoreductase</keyword>
<keyword id="KW-1185">Reference proteome</keyword>
<keyword id="KW-0862">Zinc</keyword>
<evidence type="ECO:0000255" key="1">
    <source>
        <dbReference type="HAMAP-Rule" id="MF_01400"/>
    </source>
</evidence>
<evidence type="ECO:0000255" key="2">
    <source>
        <dbReference type="PROSITE-ProRule" id="PRU01126"/>
    </source>
</evidence>
<accession>Q6ADJ8</accession>
<sequence>MDAGKGEYQIAKSDEEWRRELTPEQYGVLRQAGTEQPWTGELLDESRAGVYACAACGAELFRSGTKFDSGCGWPSFYESVRPEAVELLEDTRLGITRTEVRCANCGSHLGHVFPDGFRTPTGDRYCMNSISLDFQPEDE</sequence>
<gene>
    <name evidence="1" type="primary">msrB</name>
    <name type="ordered locus">Lxx18050</name>
</gene>
<dbReference type="EC" id="1.8.4.12" evidence="1"/>
<dbReference type="EMBL" id="AE016822">
    <property type="protein sequence ID" value="AAT89548.1"/>
    <property type="molecule type" value="Genomic_DNA"/>
</dbReference>
<dbReference type="RefSeq" id="WP_011186536.1">
    <property type="nucleotide sequence ID" value="NC_006087.1"/>
</dbReference>
<dbReference type="SMR" id="Q6ADJ8"/>
<dbReference type="STRING" id="281090.Lxx18050"/>
<dbReference type="KEGG" id="lxx:Lxx18050"/>
<dbReference type="eggNOG" id="COG0229">
    <property type="taxonomic scope" value="Bacteria"/>
</dbReference>
<dbReference type="HOGENOM" id="CLU_031040_8_5_11"/>
<dbReference type="Proteomes" id="UP000001306">
    <property type="component" value="Chromosome"/>
</dbReference>
<dbReference type="GO" id="GO:0005737">
    <property type="term" value="C:cytoplasm"/>
    <property type="evidence" value="ECO:0007669"/>
    <property type="project" value="TreeGrafter"/>
</dbReference>
<dbReference type="GO" id="GO:0033743">
    <property type="term" value="F:peptide-methionine (R)-S-oxide reductase activity"/>
    <property type="evidence" value="ECO:0007669"/>
    <property type="project" value="UniProtKB-UniRule"/>
</dbReference>
<dbReference type="GO" id="GO:0008270">
    <property type="term" value="F:zinc ion binding"/>
    <property type="evidence" value="ECO:0007669"/>
    <property type="project" value="UniProtKB-UniRule"/>
</dbReference>
<dbReference type="GO" id="GO:0030091">
    <property type="term" value="P:protein repair"/>
    <property type="evidence" value="ECO:0007669"/>
    <property type="project" value="InterPro"/>
</dbReference>
<dbReference type="GO" id="GO:0006979">
    <property type="term" value="P:response to oxidative stress"/>
    <property type="evidence" value="ECO:0007669"/>
    <property type="project" value="InterPro"/>
</dbReference>
<dbReference type="FunFam" id="2.170.150.20:FF:000009">
    <property type="entry name" value="Peptide-methionine (R)-S-oxide reductase"/>
    <property type="match status" value="1"/>
</dbReference>
<dbReference type="Gene3D" id="2.170.150.20">
    <property type="entry name" value="Peptide methionine sulfoxide reductase"/>
    <property type="match status" value="1"/>
</dbReference>
<dbReference type="HAMAP" id="MF_01400">
    <property type="entry name" value="MsrB"/>
    <property type="match status" value="1"/>
</dbReference>
<dbReference type="InterPro" id="IPR028427">
    <property type="entry name" value="Met_Sox_Rdtase_MsrB"/>
</dbReference>
<dbReference type="InterPro" id="IPR002579">
    <property type="entry name" value="Met_Sox_Rdtase_MsrB_dom"/>
</dbReference>
<dbReference type="InterPro" id="IPR011057">
    <property type="entry name" value="Mss4-like_sf"/>
</dbReference>
<dbReference type="NCBIfam" id="TIGR00357">
    <property type="entry name" value="peptide-methionine (R)-S-oxide reductase MsrB"/>
    <property type="match status" value="1"/>
</dbReference>
<dbReference type="PANTHER" id="PTHR10173">
    <property type="entry name" value="METHIONINE SULFOXIDE REDUCTASE"/>
    <property type="match status" value="1"/>
</dbReference>
<dbReference type="PANTHER" id="PTHR10173:SF52">
    <property type="entry name" value="METHIONINE-R-SULFOXIDE REDUCTASE B1"/>
    <property type="match status" value="1"/>
</dbReference>
<dbReference type="Pfam" id="PF01641">
    <property type="entry name" value="SelR"/>
    <property type="match status" value="1"/>
</dbReference>
<dbReference type="SUPFAM" id="SSF51316">
    <property type="entry name" value="Mss4-like"/>
    <property type="match status" value="1"/>
</dbReference>
<dbReference type="PROSITE" id="PS51790">
    <property type="entry name" value="MSRB"/>
    <property type="match status" value="1"/>
</dbReference>